<reference evidence="9" key="1">
    <citation type="journal article" date="2012" name="J. Agric. Food Chem.">
        <title>Purification, Cloning, and Immunological Characterization of Arginine Kinase, a Novel Allergen of Octopus fangsiao.</title>
        <authorList>
            <person name="Shen H.W."/>
            <person name="Cao M.J."/>
            <person name="Cai Q.F."/>
            <person name="Ruan M.M."/>
            <person name="Mao H.Y."/>
            <person name="Su W.J."/>
            <person name="Liu G.M."/>
        </authorList>
    </citation>
    <scope>NUCLEOTIDE SEQUENCE [MRNA]</scope>
    <scope>PROTEIN SEQUENCE OF 36-47; 87-116; 122-133; 172-185; 209-227; 301-320; 321-335 AND 336-342</scope>
    <scope>IDENTIFICATION BY MASS SPECTROMETRY</scope>
    <scope>3D-STRUCTURE MODELING</scope>
    <scope>BIOPHYSICOCHEMICAL PROPERTIES</scope>
    <scope>TISSUE SPECIFICITY</scope>
    <scope>ALLERGEN</scope>
    <source>
        <tissue evidence="7">Muscle</tissue>
    </source>
</reference>
<sequence length="348" mass="39239">MAEELFKTLQNAKECHSLLKKHLTKERFDKLKGLKTKFGGTLADCIRSGCKNPDSGVGIYASDPDAYTVFAEVLDAVIMDYHKIDKVHHPIPDFGDVNNLNIGDLDPSGNMIVSTRVRVGRSHDSFGFPPVLKKDDRIKMEQVSVEALKSLDGELAGSYFPLANMSADVQKQLTEDHFLFNDSDRFLKAASGYDDWPIGRGIYFSENKTFLCWVNEEDHLRLISMQKGGNLGEVYKRLVSAINKMEKKLNFAKKDNMGYLTFCPSNLGTTMRASVHIKIPKLSQRSDFKSICDKYNLQARGIHGEHTESVCGVYDISNKRRMGLTEYEAVTEMMRGVNEIIREETNST</sequence>
<name>KARG_AMPFA</name>
<dbReference type="EC" id="2.7.3.3" evidence="1"/>
<dbReference type="EMBL" id="JN127374">
    <property type="protein sequence ID" value="AEK65120.1"/>
    <property type="molecule type" value="mRNA"/>
</dbReference>
<dbReference type="SMR" id="G1ESZ9"/>
<dbReference type="Allergome" id="9898">
    <property type="allergen name" value="Oct f 2"/>
</dbReference>
<dbReference type="GO" id="GO:0005615">
    <property type="term" value="C:extracellular space"/>
    <property type="evidence" value="ECO:0007669"/>
    <property type="project" value="TreeGrafter"/>
</dbReference>
<dbReference type="GO" id="GO:0004054">
    <property type="term" value="F:arginine kinase activity"/>
    <property type="evidence" value="ECO:0000250"/>
    <property type="project" value="UniProtKB"/>
</dbReference>
<dbReference type="GO" id="GO:0005524">
    <property type="term" value="F:ATP binding"/>
    <property type="evidence" value="ECO:0000250"/>
    <property type="project" value="UniProtKB"/>
</dbReference>
<dbReference type="GO" id="GO:0004111">
    <property type="term" value="F:creatine kinase activity"/>
    <property type="evidence" value="ECO:0007669"/>
    <property type="project" value="InterPro"/>
</dbReference>
<dbReference type="GO" id="GO:0046314">
    <property type="term" value="P:phosphocreatine biosynthetic process"/>
    <property type="evidence" value="ECO:0007669"/>
    <property type="project" value="InterPro"/>
</dbReference>
<dbReference type="CDD" id="cd07932">
    <property type="entry name" value="arginine_kinase_like"/>
    <property type="match status" value="1"/>
</dbReference>
<dbReference type="FunFam" id="3.30.590.10:FF:000006">
    <property type="entry name" value="Arginine kinase 1"/>
    <property type="match status" value="1"/>
</dbReference>
<dbReference type="FunFam" id="1.10.135.10:FF:000003">
    <property type="entry name" value="Three-domain arginine kinase"/>
    <property type="match status" value="1"/>
</dbReference>
<dbReference type="Gene3D" id="1.10.135.10">
    <property type="entry name" value="ATP:guanido phosphotransferase, N-terminal domain"/>
    <property type="match status" value="1"/>
</dbReference>
<dbReference type="Gene3D" id="3.30.590.10">
    <property type="entry name" value="Glutamine synthetase/guanido kinase, catalytic domain"/>
    <property type="match status" value="1"/>
</dbReference>
<dbReference type="InterPro" id="IPR000749">
    <property type="entry name" value="ATP-guanido_PTrfase"/>
</dbReference>
<dbReference type="InterPro" id="IPR022415">
    <property type="entry name" value="ATP-guanido_PTrfase_AS"/>
</dbReference>
<dbReference type="InterPro" id="IPR022414">
    <property type="entry name" value="ATP-guanido_PTrfase_cat"/>
</dbReference>
<dbReference type="InterPro" id="IPR022413">
    <property type="entry name" value="ATP-guanido_PTrfase_N"/>
</dbReference>
<dbReference type="InterPro" id="IPR036802">
    <property type="entry name" value="ATP-guanido_PTrfase_N_sf"/>
</dbReference>
<dbReference type="InterPro" id="IPR014746">
    <property type="entry name" value="Gln_synth/guanido_kin_cat_dom"/>
</dbReference>
<dbReference type="PANTHER" id="PTHR11547:SF38">
    <property type="entry name" value="ARGININE KINASE 1-RELATED"/>
    <property type="match status" value="1"/>
</dbReference>
<dbReference type="PANTHER" id="PTHR11547">
    <property type="entry name" value="ARGININE OR CREATINE KINASE"/>
    <property type="match status" value="1"/>
</dbReference>
<dbReference type="Pfam" id="PF00217">
    <property type="entry name" value="ATP-gua_Ptrans"/>
    <property type="match status" value="1"/>
</dbReference>
<dbReference type="Pfam" id="PF02807">
    <property type="entry name" value="ATP-gua_PtransN"/>
    <property type="match status" value="1"/>
</dbReference>
<dbReference type="SUPFAM" id="SSF55931">
    <property type="entry name" value="Glutamine synthetase/guanido kinase"/>
    <property type="match status" value="1"/>
</dbReference>
<dbReference type="SUPFAM" id="SSF48034">
    <property type="entry name" value="Guanido kinase N-terminal domain"/>
    <property type="match status" value="1"/>
</dbReference>
<dbReference type="PROSITE" id="PS00112">
    <property type="entry name" value="PHOSPHAGEN_KINASE"/>
    <property type="match status" value="1"/>
</dbReference>
<dbReference type="PROSITE" id="PS51510">
    <property type="entry name" value="PHOSPHAGEN_KINASE_C"/>
    <property type="match status" value="1"/>
</dbReference>
<dbReference type="PROSITE" id="PS51509">
    <property type="entry name" value="PHOSPHAGEN_KINASE_N"/>
    <property type="match status" value="1"/>
</dbReference>
<keyword id="KW-0020">Allergen</keyword>
<keyword id="KW-0067">ATP-binding</keyword>
<keyword id="KW-0903">Direct protein sequencing</keyword>
<keyword id="KW-0418">Kinase</keyword>
<keyword id="KW-0547">Nucleotide-binding</keyword>
<keyword id="KW-0808">Transferase</keyword>
<organism evidence="9">
    <name type="scientific">Amphioctopus fangsiao</name>
    <name type="common">Ocellated octopus</name>
    <name type="synonym">Octopus ocellatus</name>
    <dbReference type="NCBI Taxonomy" id="515817"/>
    <lineage>
        <taxon>Eukaryota</taxon>
        <taxon>Metazoa</taxon>
        <taxon>Spiralia</taxon>
        <taxon>Lophotrochozoa</taxon>
        <taxon>Mollusca</taxon>
        <taxon>Cephalopoda</taxon>
        <taxon>Coleoidea</taxon>
        <taxon>Octopodiformes</taxon>
        <taxon>Octopoda</taxon>
        <taxon>Incirrata</taxon>
        <taxon>Octopodidae</taxon>
        <taxon>Amphioctopus</taxon>
    </lineage>
</organism>
<comment type="function">
    <text evidence="2">Catalyzes the reversible transfer of high energy ATP gamma-phosphate group to L-arginine.</text>
</comment>
<comment type="catalytic activity">
    <reaction evidence="1">
        <text>L-arginine + ATP = N(omega)-phospho-L-arginine + ADP + H(+)</text>
        <dbReference type="Rhea" id="RHEA:22940"/>
        <dbReference type="ChEBI" id="CHEBI:15378"/>
        <dbReference type="ChEBI" id="CHEBI:30616"/>
        <dbReference type="ChEBI" id="CHEBI:32682"/>
        <dbReference type="ChEBI" id="CHEBI:58477"/>
        <dbReference type="ChEBI" id="CHEBI:456216"/>
        <dbReference type="EC" id="2.7.3.3"/>
    </reaction>
</comment>
<comment type="biophysicochemical properties">
    <phDependence>
        <text evidence="6">Stable below pH 9.0. Degrades by incubation at pH 9.5 and 10.0 for 1 hour.</text>
    </phDependence>
    <temperatureDependence>
        <text evidence="6">Relatively stable below 30 degrees Celsius, but aggregates above 40 degrees Celsius. Flocculent precipitate appears by incubation at 70 degrees Celsius for 30 minutes.</text>
    </temperatureDependence>
</comment>
<comment type="tissue specificity">
    <text evidence="6">Muscle (at protein level).</text>
</comment>
<comment type="allergen">
    <text evidence="6">Causes an allergic reaction in human. Binds to IgE in 33% of the 12 patients tested allergic to octopus. IgE-binding activity can be significantly reduced with thermal, acidic or alkali treatment.</text>
</comment>
<comment type="similarity">
    <text evidence="4 5 8">Belongs to the ATP:guanido phosphotransferase family.</text>
</comment>
<accession>G1ESZ9</accession>
<proteinExistence type="evidence at protein level"/>
<feature type="chain" id="PRO_0000447435" description="Arginine kinase Oct f 2">
    <location>
        <begin position="1"/>
        <end position="348"/>
    </location>
</feature>
<feature type="domain" description="Phosphagen kinase N-terminal" evidence="3">
    <location>
        <begin position="1"/>
        <end position="83"/>
    </location>
</feature>
<feature type="domain" description="Phosphagen kinase C-terminal" evidence="4">
    <location>
        <begin position="111"/>
        <end position="347"/>
    </location>
</feature>
<feature type="binding site" evidence="2">
    <location>
        <begin position="56"/>
        <end position="60"/>
    </location>
    <ligand>
        <name>substrate</name>
    </ligand>
</feature>
<feature type="binding site" evidence="4">
    <location>
        <begin position="114"/>
        <end position="118"/>
    </location>
    <ligand>
        <name>ATP</name>
        <dbReference type="ChEBI" id="CHEBI:30616"/>
    </ligand>
</feature>
<feature type="binding site" evidence="4">
    <location>
        <position position="177"/>
    </location>
    <ligand>
        <name>ATP</name>
        <dbReference type="ChEBI" id="CHEBI:30616"/>
    </ligand>
</feature>
<feature type="binding site" evidence="2">
    <location>
        <position position="217"/>
    </location>
    <ligand>
        <name>substrate</name>
    </ligand>
</feature>
<feature type="binding site" evidence="4">
    <location>
        <position position="221"/>
    </location>
    <ligand>
        <name>ATP</name>
        <dbReference type="ChEBI" id="CHEBI:30616"/>
    </ligand>
</feature>
<feature type="binding site" evidence="2">
    <location>
        <position position="263"/>
    </location>
    <ligand>
        <name>substrate</name>
    </ligand>
</feature>
<feature type="binding site" evidence="4">
    <location>
        <begin position="272"/>
        <end position="276"/>
    </location>
    <ligand>
        <name>ATP</name>
        <dbReference type="ChEBI" id="CHEBI:30616"/>
    </ligand>
</feature>
<feature type="binding site" evidence="4">
    <location>
        <begin position="300"/>
        <end position="305"/>
    </location>
    <ligand>
        <name>ATP</name>
        <dbReference type="ChEBI" id="CHEBI:30616"/>
    </ligand>
</feature>
<feature type="binding site" evidence="2">
    <location>
        <position position="305"/>
    </location>
    <ligand>
        <name>substrate</name>
    </ligand>
</feature>
<feature type="sequence conflict" description="In Ref. 1; AA sequence." evidence="8" ref="1">
    <original>H</original>
    <variation>Q</variation>
    <location>
        <position position="88"/>
    </location>
</feature>
<feature type="sequence conflict" description="In Ref. 1; AA sequence." evidence="8" ref="1">
    <original>I</original>
    <variation>V</variation>
    <location>
        <position position="91"/>
    </location>
</feature>
<feature type="sequence conflict" description="In Ref. 1; AA sequence." evidence="8" ref="1">
    <original>NM</original>
    <variation>SL</variation>
    <location>
        <begin position="110"/>
        <end position="111"/>
    </location>
</feature>
<feature type="sequence conflict" description="In Ref. 1; AA sequence." evidence="8" ref="1">
    <original>E</original>
    <variation>D</variation>
    <location>
        <position position="175"/>
    </location>
</feature>
<feature type="sequence conflict" description="In Ref. 1; AA sequence." evidence="8" ref="1">
    <original>C</original>
    <variation>G</variation>
    <location>
        <position position="311"/>
    </location>
</feature>
<evidence type="ECO:0000250" key="1">
    <source>
        <dbReference type="UniProtKB" id="C7E3T4"/>
    </source>
</evidence>
<evidence type="ECO:0000250" key="2">
    <source>
        <dbReference type="UniProtKB" id="Q004B5"/>
    </source>
</evidence>
<evidence type="ECO:0000255" key="3">
    <source>
        <dbReference type="PROSITE-ProRule" id="PRU00842"/>
    </source>
</evidence>
<evidence type="ECO:0000255" key="4">
    <source>
        <dbReference type="PROSITE-ProRule" id="PRU00843"/>
    </source>
</evidence>
<evidence type="ECO:0000255" key="5">
    <source>
        <dbReference type="RuleBase" id="RU000505"/>
    </source>
</evidence>
<evidence type="ECO:0000269" key="6">
    <source>
    </source>
</evidence>
<evidence type="ECO:0000303" key="7">
    <source>
    </source>
</evidence>
<evidence type="ECO:0000305" key="8"/>
<evidence type="ECO:0000312" key="9">
    <source>
        <dbReference type="EMBL" id="AEK65120.1"/>
    </source>
</evidence>
<protein>
    <recommendedName>
        <fullName evidence="7">Arginine kinase Oct f 2</fullName>
        <shortName evidence="7">AK</shortName>
        <ecNumber evidence="1">2.7.3.3</ecNumber>
    </recommendedName>
    <allergenName evidence="8">Oct f 2</allergenName>
</protein>